<accession>A8GUI6</accession>
<proteinExistence type="inferred from homology"/>
<organism>
    <name type="scientific">Rickettsia bellii (strain OSU 85-389)</name>
    <dbReference type="NCBI Taxonomy" id="391896"/>
    <lineage>
        <taxon>Bacteria</taxon>
        <taxon>Pseudomonadati</taxon>
        <taxon>Pseudomonadota</taxon>
        <taxon>Alphaproteobacteria</taxon>
        <taxon>Rickettsiales</taxon>
        <taxon>Rickettsiaceae</taxon>
        <taxon>Rickettsieae</taxon>
        <taxon>Rickettsia</taxon>
        <taxon>belli group</taxon>
    </lineage>
</organism>
<comment type="function">
    <text evidence="1">Catalyzes the deamination of dCTP to dUTP.</text>
</comment>
<comment type="catalytic activity">
    <reaction evidence="1">
        <text>dCTP + H2O + H(+) = dUTP + NH4(+)</text>
        <dbReference type="Rhea" id="RHEA:22680"/>
        <dbReference type="ChEBI" id="CHEBI:15377"/>
        <dbReference type="ChEBI" id="CHEBI:15378"/>
        <dbReference type="ChEBI" id="CHEBI:28938"/>
        <dbReference type="ChEBI" id="CHEBI:61481"/>
        <dbReference type="ChEBI" id="CHEBI:61555"/>
        <dbReference type="EC" id="3.5.4.13"/>
    </reaction>
</comment>
<comment type="pathway">
    <text evidence="1">Pyrimidine metabolism; dUMP biosynthesis; dUMP from dCTP (dUTP route): step 1/2.</text>
</comment>
<comment type="subunit">
    <text evidence="1">Homotrimer.</text>
</comment>
<comment type="similarity">
    <text evidence="1">Belongs to the dCTP deaminase family.</text>
</comment>
<reference key="1">
    <citation type="submission" date="2007-09" db="EMBL/GenBank/DDBJ databases">
        <title>Complete genome sequencing of Rickettsia bellii.</title>
        <authorList>
            <person name="Madan A."/>
            <person name="Lee H."/>
            <person name="Madan A."/>
            <person name="Yoon J.-G."/>
            <person name="Ryu G.-Y."/>
            <person name="Dasch G."/>
            <person name="Ereemeva M."/>
        </authorList>
    </citation>
    <scope>NUCLEOTIDE SEQUENCE [LARGE SCALE GENOMIC DNA]</scope>
    <source>
        <strain>OSU 85-389</strain>
    </source>
</reference>
<gene>
    <name evidence="1" type="primary">dcd</name>
    <name type="ordered locus">A1I_00380</name>
</gene>
<dbReference type="EC" id="3.5.4.13" evidence="1"/>
<dbReference type="EMBL" id="CP000849">
    <property type="protein sequence ID" value="ABV78482.1"/>
    <property type="molecule type" value="Genomic_DNA"/>
</dbReference>
<dbReference type="RefSeq" id="WP_011477948.1">
    <property type="nucleotide sequence ID" value="NC_009883.1"/>
</dbReference>
<dbReference type="SMR" id="A8GUI6"/>
<dbReference type="KEGG" id="rbo:A1I_00380"/>
<dbReference type="HOGENOM" id="CLU_087476_4_0_5"/>
<dbReference type="UniPathway" id="UPA00610">
    <property type="reaction ID" value="UER00665"/>
</dbReference>
<dbReference type="GO" id="GO:0008829">
    <property type="term" value="F:dCTP deaminase activity"/>
    <property type="evidence" value="ECO:0007669"/>
    <property type="project" value="UniProtKB-UniRule"/>
</dbReference>
<dbReference type="GO" id="GO:0000166">
    <property type="term" value="F:nucleotide binding"/>
    <property type="evidence" value="ECO:0007669"/>
    <property type="project" value="UniProtKB-KW"/>
</dbReference>
<dbReference type="GO" id="GO:0006226">
    <property type="term" value="P:dUMP biosynthetic process"/>
    <property type="evidence" value="ECO:0007669"/>
    <property type="project" value="UniProtKB-UniPathway"/>
</dbReference>
<dbReference type="GO" id="GO:0006229">
    <property type="term" value="P:dUTP biosynthetic process"/>
    <property type="evidence" value="ECO:0007669"/>
    <property type="project" value="UniProtKB-UniRule"/>
</dbReference>
<dbReference type="CDD" id="cd07557">
    <property type="entry name" value="trimeric_dUTPase"/>
    <property type="match status" value="1"/>
</dbReference>
<dbReference type="FunFam" id="2.70.40.10:FF:000001">
    <property type="entry name" value="dCTP deaminase"/>
    <property type="match status" value="1"/>
</dbReference>
<dbReference type="Gene3D" id="2.70.40.10">
    <property type="match status" value="1"/>
</dbReference>
<dbReference type="HAMAP" id="MF_00146">
    <property type="entry name" value="dCTP_deaminase"/>
    <property type="match status" value="1"/>
</dbReference>
<dbReference type="InterPro" id="IPR011962">
    <property type="entry name" value="dCTP_deaminase"/>
</dbReference>
<dbReference type="InterPro" id="IPR036157">
    <property type="entry name" value="dUTPase-like_sf"/>
</dbReference>
<dbReference type="InterPro" id="IPR033704">
    <property type="entry name" value="dUTPase_trimeric"/>
</dbReference>
<dbReference type="NCBIfam" id="TIGR02274">
    <property type="entry name" value="dCTP_deam"/>
    <property type="match status" value="1"/>
</dbReference>
<dbReference type="PANTHER" id="PTHR42680">
    <property type="entry name" value="DCTP DEAMINASE"/>
    <property type="match status" value="1"/>
</dbReference>
<dbReference type="PANTHER" id="PTHR42680:SF3">
    <property type="entry name" value="DCTP DEAMINASE"/>
    <property type="match status" value="1"/>
</dbReference>
<dbReference type="Pfam" id="PF22769">
    <property type="entry name" value="DCD"/>
    <property type="match status" value="1"/>
</dbReference>
<dbReference type="SUPFAM" id="SSF51283">
    <property type="entry name" value="dUTPase-like"/>
    <property type="match status" value="1"/>
</dbReference>
<feature type="chain" id="PRO_1000009800" description="dCTP deaminase">
    <location>
        <begin position="1"/>
        <end position="188"/>
    </location>
</feature>
<feature type="active site" description="Proton donor/acceptor" evidence="1">
    <location>
        <position position="137"/>
    </location>
</feature>
<feature type="binding site" evidence="1">
    <location>
        <begin position="111"/>
        <end position="116"/>
    </location>
    <ligand>
        <name>dCTP</name>
        <dbReference type="ChEBI" id="CHEBI:61481"/>
    </ligand>
</feature>
<feature type="binding site" evidence="1">
    <location>
        <begin position="135"/>
        <end position="137"/>
    </location>
    <ligand>
        <name>dCTP</name>
        <dbReference type="ChEBI" id="CHEBI:61481"/>
    </ligand>
</feature>
<feature type="binding site" evidence="1">
    <location>
        <position position="156"/>
    </location>
    <ligand>
        <name>dCTP</name>
        <dbReference type="ChEBI" id="CHEBI:61481"/>
    </ligand>
</feature>
<feature type="binding site" evidence="1">
    <location>
        <position position="170"/>
    </location>
    <ligand>
        <name>dCTP</name>
        <dbReference type="ChEBI" id="CHEBI:61481"/>
    </ligand>
</feature>
<feature type="binding site" evidence="1">
    <location>
        <position position="179"/>
    </location>
    <ligand>
        <name>dCTP</name>
        <dbReference type="ChEBI" id="CHEBI:61481"/>
    </ligand>
</feature>
<feature type="binding site" evidence="1">
    <location>
        <position position="180"/>
    </location>
    <ligand>
        <name>dCTP</name>
        <dbReference type="ChEBI" id="CHEBI:61481"/>
    </ligand>
</feature>
<keyword id="KW-0378">Hydrolase</keyword>
<keyword id="KW-0546">Nucleotide metabolism</keyword>
<keyword id="KW-0547">Nucleotide-binding</keyword>
<protein>
    <recommendedName>
        <fullName evidence="1">dCTP deaminase</fullName>
        <ecNumber evidence="1">3.5.4.13</ecNumber>
    </recommendedName>
    <alternativeName>
        <fullName evidence="1">Deoxycytidine triphosphate deaminase</fullName>
    </alternativeName>
</protein>
<name>DCD_RICB8</name>
<evidence type="ECO:0000255" key="1">
    <source>
        <dbReference type="HAMAP-Rule" id="MF_00146"/>
    </source>
</evidence>
<sequence length="188" mass="21376">MSIMSDKWIREAVINHKMIEPFAEKQVRVKDSEKIISYGLSSYGYDARVSNEFKIFTNINSTMVDPKNFDKYNLVDREVDVCIIPPNSFALGRTVEYFKIPRDVLVICVGKSTYARCGIIVNVTPLEPEWEGHVTLEFSNTTPLPAKIYANEGACQFLFLKGDQICDLSYADRQGKYMKQLGVTLPLT</sequence>